<evidence type="ECO:0000255" key="1">
    <source>
        <dbReference type="PROSITE-ProRule" id="PRU00267"/>
    </source>
</evidence>
<sequence>VKRPMNAFMVWSQHERRKIMDQWPDMHNAEISKRLGRRWELLQDSEKIPFVKEADGLLLKHMADYPNYKYRP</sequence>
<keyword id="KW-0238">DNA-binding</keyword>
<keyword id="KW-0539">Nucleus</keyword>
<protein>
    <recommendedName>
        <fullName>SRY-related protein ADW4</fullName>
    </recommendedName>
</protein>
<proteinExistence type="inferred from homology"/>
<feature type="chain" id="PRO_0000048788" description="SRY-related protein ADW4">
    <location>
        <begin position="1" status="less than"/>
        <end position="72" status="greater than"/>
    </location>
</feature>
<feature type="DNA-binding region" description="HMG box" evidence="1">
    <location>
        <begin position="1"/>
        <end position="69"/>
    </location>
</feature>
<feature type="non-terminal residue">
    <location>
        <position position="1"/>
    </location>
</feature>
<feature type="non-terminal residue">
    <location>
        <position position="72"/>
    </location>
</feature>
<dbReference type="EMBL" id="M86311">
    <property type="protein sequence ID" value="AAA48524.1"/>
    <property type="molecule type" value="Genomic_DNA"/>
</dbReference>
<dbReference type="PIR" id="I50020">
    <property type="entry name" value="I50020"/>
</dbReference>
<dbReference type="SMR" id="P40635"/>
<dbReference type="GO" id="GO:0005634">
    <property type="term" value="C:nucleus"/>
    <property type="evidence" value="ECO:0007669"/>
    <property type="project" value="UniProtKB-SubCell"/>
</dbReference>
<dbReference type="GO" id="GO:0001228">
    <property type="term" value="F:DNA-binding transcription activator activity, RNA polymerase II-specific"/>
    <property type="evidence" value="ECO:0007669"/>
    <property type="project" value="TreeGrafter"/>
</dbReference>
<dbReference type="GO" id="GO:0000978">
    <property type="term" value="F:RNA polymerase II cis-regulatory region sequence-specific DNA binding"/>
    <property type="evidence" value="ECO:0007669"/>
    <property type="project" value="TreeGrafter"/>
</dbReference>
<dbReference type="GO" id="GO:0007420">
    <property type="term" value="P:brain development"/>
    <property type="evidence" value="ECO:0007669"/>
    <property type="project" value="TreeGrafter"/>
</dbReference>
<dbReference type="GO" id="GO:0048593">
    <property type="term" value="P:camera-type eye morphogenesis"/>
    <property type="evidence" value="ECO:0007669"/>
    <property type="project" value="TreeGrafter"/>
</dbReference>
<dbReference type="GO" id="GO:0000122">
    <property type="term" value="P:negative regulation of transcription by RNA polymerase II"/>
    <property type="evidence" value="ECO:0007669"/>
    <property type="project" value="TreeGrafter"/>
</dbReference>
<dbReference type="GO" id="GO:0030182">
    <property type="term" value="P:neuron differentiation"/>
    <property type="evidence" value="ECO:0007669"/>
    <property type="project" value="TreeGrafter"/>
</dbReference>
<dbReference type="FunFam" id="1.10.30.10:FF:000007">
    <property type="entry name" value="Transcription factor SOX"/>
    <property type="match status" value="1"/>
</dbReference>
<dbReference type="Gene3D" id="1.10.30.10">
    <property type="entry name" value="High mobility group box domain"/>
    <property type="match status" value="1"/>
</dbReference>
<dbReference type="InterPro" id="IPR009071">
    <property type="entry name" value="HMG_box_dom"/>
</dbReference>
<dbReference type="InterPro" id="IPR036910">
    <property type="entry name" value="HMG_box_dom_sf"/>
</dbReference>
<dbReference type="InterPro" id="IPR050140">
    <property type="entry name" value="SRY-related_HMG-box_TF-like"/>
</dbReference>
<dbReference type="PANTHER" id="PTHR10270">
    <property type="entry name" value="SOX TRANSCRIPTION FACTOR"/>
    <property type="match status" value="1"/>
</dbReference>
<dbReference type="PANTHER" id="PTHR10270:SF221">
    <property type="entry name" value="TRANSCRIPTION FACTOR SOX-12"/>
    <property type="match status" value="1"/>
</dbReference>
<dbReference type="Pfam" id="PF00505">
    <property type="entry name" value="HMG_box"/>
    <property type="match status" value="1"/>
</dbReference>
<dbReference type="SMART" id="SM00398">
    <property type="entry name" value="HMG"/>
    <property type="match status" value="1"/>
</dbReference>
<dbReference type="SUPFAM" id="SSF47095">
    <property type="entry name" value="HMG-box"/>
    <property type="match status" value="1"/>
</dbReference>
<dbReference type="PROSITE" id="PS50118">
    <property type="entry name" value="HMG_BOX_2"/>
    <property type="match status" value="1"/>
</dbReference>
<name>ADW4_ALLMI</name>
<organism>
    <name type="scientific">Alligator mississippiensis</name>
    <name type="common">American alligator</name>
    <dbReference type="NCBI Taxonomy" id="8496"/>
    <lineage>
        <taxon>Eukaryota</taxon>
        <taxon>Metazoa</taxon>
        <taxon>Chordata</taxon>
        <taxon>Craniata</taxon>
        <taxon>Vertebrata</taxon>
        <taxon>Euteleostomi</taxon>
        <taxon>Archelosauria</taxon>
        <taxon>Archosauria</taxon>
        <taxon>Crocodylia</taxon>
        <taxon>Alligatoridae</taxon>
        <taxon>Alligatorinae</taxon>
        <taxon>Alligator</taxon>
    </lineage>
</organism>
<accession>P40635</accession>
<reference key="1">
    <citation type="journal article" date="1993" name="PCR Methods Appl.">
        <title>PCR amplification of SRY-related gene sequences reveals evolutionary conservation of the SRY-box motif.</title>
        <authorList>
            <person name="Coriat A.M."/>
            <person name="Mueller U."/>
            <person name="Harry J.L."/>
            <person name="Uwanogho D."/>
            <person name="Sharpe P.T."/>
        </authorList>
    </citation>
    <scope>NUCLEOTIDE SEQUENCE [GENOMIC DNA]</scope>
</reference>
<comment type="subcellular location">
    <subcellularLocation>
        <location evidence="1">Nucleus</location>
    </subcellularLocation>
</comment>